<protein>
    <recommendedName>
        <fullName evidence="1">Biosynthetic peptidoglycan transglycosylase</fullName>
        <ecNumber evidence="1">2.4.99.28</ecNumber>
    </recommendedName>
    <alternativeName>
        <fullName evidence="1">Glycan polymerase</fullName>
    </alternativeName>
    <alternativeName>
        <fullName evidence="1">Peptidoglycan glycosyltransferase MtgA</fullName>
        <shortName evidence="1">PGT</shortName>
    </alternativeName>
</protein>
<feature type="chain" id="PRO_0000083135" description="Biosynthetic peptidoglycan transglycosylase">
    <location>
        <begin position="1"/>
        <end position="246"/>
    </location>
</feature>
<feature type="transmembrane region" description="Helical" evidence="1">
    <location>
        <begin position="28"/>
        <end position="48"/>
    </location>
</feature>
<comment type="function">
    <text evidence="1">Peptidoglycan polymerase that catalyzes glycan chain elongation from lipid-linked precursors.</text>
</comment>
<comment type="catalytic activity">
    <reaction evidence="1">
        <text>[GlcNAc-(1-&gt;4)-Mur2Ac(oyl-L-Ala-gamma-D-Glu-L-Lys-D-Ala-D-Ala)](n)-di-trans,octa-cis-undecaprenyl diphosphate + beta-D-GlcNAc-(1-&gt;4)-Mur2Ac(oyl-L-Ala-gamma-D-Glu-L-Lys-D-Ala-D-Ala)-di-trans,octa-cis-undecaprenyl diphosphate = [GlcNAc-(1-&gt;4)-Mur2Ac(oyl-L-Ala-gamma-D-Glu-L-Lys-D-Ala-D-Ala)](n+1)-di-trans,octa-cis-undecaprenyl diphosphate + di-trans,octa-cis-undecaprenyl diphosphate + H(+)</text>
        <dbReference type="Rhea" id="RHEA:23708"/>
        <dbReference type="Rhea" id="RHEA-COMP:9602"/>
        <dbReference type="Rhea" id="RHEA-COMP:9603"/>
        <dbReference type="ChEBI" id="CHEBI:15378"/>
        <dbReference type="ChEBI" id="CHEBI:58405"/>
        <dbReference type="ChEBI" id="CHEBI:60033"/>
        <dbReference type="ChEBI" id="CHEBI:78435"/>
        <dbReference type="EC" id="2.4.99.28"/>
    </reaction>
</comment>
<comment type="pathway">
    <text evidence="1">Cell wall biogenesis; peptidoglycan biosynthesis.</text>
</comment>
<comment type="subcellular location">
    <subcellularLocation>
        <location evidence="1">Cell inner membrane</location>
        <topology evidence="1">Single-pass membrane protein</topology>
    </subcellularLocation>
</comment>
<comment type="similarity">
    <text evidence="1">Belongs to the glycosyltransferase 51 family.</text>
</comment>
<evidence type="ECO:0000255" key="1">
    <source>
        <dbReference type="HAMAP-Rule" id="MF_00766"/>
    </source>
</evidence>
<accession>Q9CNV0</accession>
<reference key="1">
    <citation type="journal article" date="2001" name="Proc. Natl. Acad. Sci. U.S.A.">
        <title>Complete genomic sequence of Pasteurella multocida Pm70.</title>
        <authorList>
            <person name="May B.J."/>
            <person name="Zhang Q."/>
            <person name="Li L.L."/>
            <person name="Paustian M.L."/>
            <person name="Whittam T.S."/>
            <person name="Kapur V."/>
        </authorList>
    </citation>
    <scope>NUCLEOTIDE SEQUENCE [LARGE SCALE GENOMIC DNA]</scope>
    <source>
        <strain>Pm70</strain>
    </source>
</reference>
<keyword id="KW-0997">Cell inner membrane</keyword>
<keyword id="KW-1003">Cell membrane</keyword>
<keyword id="KW-0133">Cell shape</keyword>
<keyword id="KW-0961">Cell wall biogenesis/degradation</keyword>
<keyword id="KW-0328">Glycosyltransferase</keyword>
<keyword id="KW-0472">Membrane</keyword>
<keyword id="KW-0573">Peptidoglycan synthesis</keyword>
<keyword id="KW-1185">Reference proteome</keyword>
<keyword id="KW-0808">Transferase</keyword>
<keyword id="KW-0812">Transmembrane</keyword>
<keyword id="KW-1133">Transmembrane helix</keyword>
<name>MTGA_PASMU</name>
<dbReference type="EC" id="2.4.99.28" evidence="1"/>
<dbReference type="EMBL" id="AE004439">
    <property type="protein sequence ID" value="AAK02408.1"/>
    <property type="molecule type" value="Genomic_DNA"/>
</dbReference>
<dbReference type="RefSeq" id="WP_010906588.1">
    <property type="nucleotide sequence ID" value="NC_002663.1"/>
</dbReference>
<dbReference type="SMR" id="Q9CNV0"/>
<dbReference type="STRING" id="272843.PM0324"/>
<dbReference type="CAZy" id="GT51">
    <property type="family name" value="Glycosyltransferase Family 51"/>
</dbReference>
<dbReference type="EnsemblBacteria" id="AAK02408">
    <property type="protein sequence ID" value="AAK02408"/>
    <property type="gene ID" value="PM0324"/>
</dbReference>
<dbReference type="KEGG" id="pmu:PM0324"/>
<dbReference type="PATRIC" id="fig|272843.6.peg.337"/>
<dbReference type="HOGENOM" id="CLU_006354_1_1_6"/>
<dbReference type="OrthoDB" id="9766909at2"/>
<dbReference type="UniPathway" id="UPA00219"/>
<dbReference type="Proteomes" id="UP000000809">
    <property type="component" value="Chromosome"/>
</dbReference>
<dbReference type="GO" id="GO:0009274">
    <property type="term" value="C:peptidoglycan-based cell wall"/>
    <property type="evidence" value="ECO:0007669"/>
    <property type="project" value="InterPro"/>
</dbReference>
<dbReference type="GO" id="GO:0005886">
    <property type="term" value="C:plasma membrane"/>
    <property type="evidence" value="ECO:0007669"/>
    <property type="project" value="UniProtKB-SubCell"/>
</dbReference>
<dbReference type="GO" id="GO:0016763">
    <property type="term" value="F:pentosyltransferase activity"/>
    <property type="evidence" value="ECO:0007669"/>
    <property type="project" value="InterPro"/>
</dbReference>
<dbReference type="GO" id="GO:0008955">
    <property type="term" value="F:peptidoglycan glycosyltransferase activity"/>
    <property type="evidence" value="ECO:0007669"/>
    <property type="project" value="UniProtKB-UniRule"/>
</dbReference>
<dbReference type="GO" id="GO:0071555">
    <property type="term" value="P:cell wall organization"/>
    <property type="evidence" value="ECO:0007669"/>
    <property type="project" value="UniProtKB-KW"/>
</dbReference>
<dbReference type="GO" id="GO:0009252">
    <property type="term" value="P:peptidoglycan biosynthetic process"/>
    <property type="evidence" value="ECO:0007669"/>
    <property type="project" value="UniProtKB-UniRule"/>
</dbReference>
<dbReference type="GO" id="GO:0008360">
    <property type="term" value="P:regulation of cell shape"/>
    <property type="evidence" value="ECO:0007669"/>
    <property type="project" value="UniProtKB-KW"/>
</dbReference>
<dbReference type="Gene3D" id="1.10.3810.10">
    <property type="entry name" value="Biosynthetic peptidoglycan transglycosylase-like"/>
    <property type="match status" value="1"/>
</dbReference>
<dbReference type="HAMAP" id="MF_00766">
    <property type="entry name" value="PGT_MtgA"/>
    <property type="match status" value="1"/>
</dbReference>
<dbReference type="InterPro" id="IPR001264">
    <property type="entry name" value="Glyco_trans_51"/>
</dbReference>
<dbReference type="InterPro" id="IPR023346">
    <property type="entry name" value="Lysozyme-like_dom_sf"/>
</dbReference>
<dbReference type="InterPro" id="IPR036950">
    <property type="entry name" value="PBP_transglycosylase"/>
</dbReference>
<dbReference type="InterPro" id="IPR011812">
    <property type="entry name" value="Pep_trsgly"/>
</dbReference>
<dbReference type="NCBIfam" id="TIGR02070">
    <property type="entry name" value="mono_pep_trsgly"/>
    <property type="match status" value="1"/>
</dbReference>
<dbReference type="PANTHER" id="PTHR30400:SF0">
    <property type="entry name" value="BIOSYNTHETIC PEPTIDOGLYCAN TRANSGLYCOSYLASE"/>
    <property type="match status" value="1"/>
</dbReference>
<dbReference type="PANTHER" id="PTHR30400">
    <property type="entry name" value="MONOFUNCTIONAL BIOSYNTHETIC PEPTIDOGLYCAN TRANSGLYCOSYLASE"/>
    <property type="match status" value="1"/>
</dbReference>
<dbReference type="Pfam" id="PF00912">
    <property type="entry name" value="Transgly"/>
    <property type="match status" value="1"/>
</dbReference>
<dbReference type="SUPFAM" id="SSF53955">
    <property type="entry name" value="Lysozyme-like"/>
    <property type="match status" value="1"/>
</dbReference>
<sequence length="246" mass="28485">MSKLKKTKHPFPCFSIWQQFKRKLYRTFALFLVLFLSSVVLFRFVPVPFSAYMLQQKIGYLFEGNLSSTIHYQWVPLEQISQSMQLAVIASEDQRFATHYGFDWDAIQSALQHNQRGKRIRGGSTISQQTAKNLYLWHGQSWLRKAIEMPTTLVLETLWSKKRILEVYLNIAEFGPNIFGVEAASQHYFRKPAKQLSNAEAALLAAVLPNPIIFKVNKPSAYVKKRQQHIQRQMGLLGKQHLSQLD</sequence>
<organism>
    <name type="scientific">Pasteurella multocida (strain Pm70)</name>
    <dbReference type="NCBI Taxonomy" id="272843"/>
    <lineage>
        <taxon>Bacteria</taxon>
        <taxon>Pseudomonadati</taxon>
        <taxon>Pseudomonadota</taxon>
        <taxon>Gammaproteobacteria</taxon>
        <taxon>Pasteurellales</taxon>
        <taxon>Pasteurellaceae</taxon>
        <taxon>Pasteurella</taxon>
    </lineage>
</organism>
<proteinExistence type="inferred from homology"/>
<gene>
    <name evidence="1" type="primary">mtgA</name>
    <name type="ordered locus">PM0324</name>
</gene>